<reference key="1">
    <citation type="journal article" date="2004" name="Biochim. Biophys. Acta">
        <title>Novel alternative splicing of mRNAs encoding poly(A) polymerases in Arabidopsis.</title>
        <authorList>
            <person name="Addepalli B."/>
            <person name="Meeks L.R."/>
            <person name="Forbes K.P."/>
            <person name="Hunt A.G."/>
        </authorList>
    </citation>
    <scope>NUCLEOTIDE SEQUENCE [MRNA] (ISOFORM 1)</scope>
    <scope>ALTERNATIVE SPLICING</scope>
    <scope>FUNCTION</scope>
    <scope>CATALYTIC ACTIVITY</scope>
    <scope>TISSUE SPECIFICITY</scope>
    <scope>GENE FAMILY</scope>
    <scope>NOMENCLATURE</scope>
</reference>
<reference key="2">
    <citation type="journal article" date="2000" name="Nature">
        <title>Sequence and analysis of chromosome 1 of the plant Arabidopsis thaliana.</title>
        <authorList>
            <person name="Theologis A."/>
            <person name="Ecker J.R."/>
            <person name="Palm C.J."/>
            <person name="Federspiel N.A."/>
            <person name="Kaul S."/>
            <person name="White O."/>
            <person name="Alonso J."/>
            <person name="Altafi H."/>
            <person name="Araujo R."/>
            <person name="Bowman C.L."/>
            <person name="Brooks S.Y."/>
            <person name="Buehler E."/>
            <person name="Chan A."/>
            <person name="Chao Q."/>
            <person name="Chen H."/>
            <person name="Cheuk R.F."/>
            <person name="Chin C.W."/>
            <person name="Chung M.K."/>
            <person name="Conn L."/>
            <person name="Conway A.B."/>
            <person name="Conway A.R."/>
            <person name="Creasy T.H."/>
            <person name="Dewar K."/>
            <person name="Dunn P."/>
            <person name="Etgu P."/>
            <person name="Feldblyum T.V."/>
            <person name="Feng J.-D."/>
            <person name="Fong B."/>
            <person name="Fujii C.Y."/>
            <person name="Gill J.E."/>
            <person name="Goldsmith A.D."/>
            <person name="Haas B."/>
            <person name="Hansen N.F."/>
            <person name="Hughes B."/>
            <person name="Huizar L."/>
            <person name="Hunter J.L."/>
            <person name="Jenkins J."/>
            <person name="Johnson-Hopson C."/>
            <person name="Khan S."/>
            <person name="Khaykin E."/>
            <person name="Kim C.J."/>
            <person name="Koo H.L."/>
            <person name="Kremenetskaia I."/>
            <person name="Kurtz D.B."/>
            <person name="Kwan A."/>
            <person name="Lam B."/>
            <person name="Langin-Hooper S."/>
            <person name="Lee A."/>
            <person name="Lee J.M."/>
            <person name="Lenz C.A."/>
            <person name="Li J.H."/>
            <person name="Li Y.-P."/>
            <person name="Lin X."/>
            <person name="Liu S.X."/>
            <person name="Liu Z.A."/>
            <person name="Luros J.S."/>
            <person name="Maiti R."/>
            <person name="Marziali A."/>
            <person name="Militscher J."/>
            <person name="Miranda M."/>
            <person name="Nguyen M."/>
            <person name="Nierman W.C."/>
            <person name="Osborne B.I."/>
            <person name="Pai G."/>
            <person name="Peterson J."/>
            <person name="Pham P.K."/>
            <person name="Rizzo M."/>
            <person name="Rooney T."/>
            <person name="Rowley D."/>
            <person name="Sakano H."/>
            <person name="Salzberg S.L."/>
            <person name="Schwartz J.R."/>
            <person name="Shinn P."/>
            <person name="Southwick A.M."/>
            <person name="Sun H."/>
            <person name="Tallon L.J."/>
            <person name="Tambunga G."/>
            <person name="Toriumi M.J."/>
            <person name="Town C.D."/>
            <person name="Utterback T."/>
            <person name="Van Aken S."/>
            <person name="Vaysberg M."/>
            <person name="Vysotskaia V.S."/>
            <person name="Walker M."/>
            <person name="Wu D."/>
            <person name="Yu G."/>
            <person name="Fraser C.M."/>
            <person name="Venter J.C."/>
            <person name="Davis R.W."/>
        </authorList>
    </citation>
    <scope>NUCLEOTIDE SEQUENCE [LARGE SCALE GENOMIC DNA]</scope>
    <source>
        <strain>cv. Columbia</strain>
    </source>
</reference>
<reference key="3">
    <citation type="journal article" date="2017" name="Plant J.">
        <title>Araport11: a complete reannotation of the Arabidopsis thaliana reference genome.</title>
        <authorList>
            <person name="Cheng C.Y."/>
            <person name="Krishnakumar V."/>
            <person name="Chan A.P."/>
            <person name="Thibaud-Nissen F."/>
            <person name="Schobel S."/>
            <person name="Town C.D."/>
        </authorList>
    </citation>
    <scope>GENOME REANNOTATION</scope>
    <source>
        <strain>cv. Columbia</strain>
    </source>
</reference>
<reference key="4">
    <citation type="journal article" date="2003" name="Science">
        <title>Empirical analysis of transcriptional activity in the Arabidopsis genome.</title>
        <authorList>
            <person name="Yamada K."/>
            <person name="Lim J."/>
            <person name="Dale J.M."/>
            <person name="Chen H."/>
            <person name="Shinn P."/>
            <person name="Palm C.J."/>
            <person name="Southwick A.M."/>
            <person name="Wu H.C."/>
            <person name="Kim C.J."/>
            <person name="Nguyen M."/>
            <person name="Pham P.K."/>
            <person name="Cheuk R.F."/>
            <person name="Karlin-Newmann G."/>
            <person name="Liu S.X."/>
            <person name="Lam B."/>
            <person name="Sakano H."/>
            <person name="Wu T."/>
            <person name="Yu G."/>
            <person name="Miranda M."/>
            <person name="Quach H.L."/>
            <person name="Tripp M."/>
            <person name="Chang C.H."/>
            <person name="Lee J.M."/>
            <person name="Toriumi M.J."/>
            <person name="Chan M.M."/>
            <person name="Tang C.C."/>
            <person name="Onodera C.S."/>
            <person name="Deng J.M."/>
            <person name="Akiyama K."/>
            <person name="Ansari Y."/>
            <person name="Arakawa T."/>
            <person name="Banh J."/>
            <person name="Banno F."/>
            <person name="Bowser L."/>
            <person name="Brooks S.Y."/>
            <person name="Carninci P."/>
            <person name="Chao Q."/>
            <person name="Choy N."/>
            <person name="Enju A."/>
            <person name="Goldsmith A.D."/>
            <person name="Gurjal M."/>
            <person name="Hansen N.F."/>
            <person name="Hayashizaki Y."/>
            <person name="Johnson-Hopson C."/>
            <person name="Hsuan V.W."/>
            <person name="Iida K."/>
            <person name="Karnes M."/>
            <person name="Khan S."/>
            <person name="Koesema E."/>
            <person name="Ishida J."/>
            <person name="Jiang P.X."/>
            <person name="Jones T."/>
            <person name="Kawai J."/>
            <person name="Kamiya A."/>
            <person name="Meyers C."/>
            <person name="Nakajima M."/>
            <person name="Narusaka M."/>
            <person name="Seki M."/>
            <person name="Sakurai T."/>
            <person name="Satou M."/>
            <person name="Tamse R."/>
            <person name="Vaysberg M."/>
            <person name="Wallender E.K."/>
            <person name="Wong C."/>
            <person name="Yamamura Y."/>
            <person name="Yuan S."/>
            <person name="Shinozaki K."/>
            <person name="Davis R.W."/>
            <person name="Theologis A."/>
            <person name="Ecker J.R."/>
        </authorList>
    </citation>
    <scope>NUCLEOTIDE SEQUENCE [LARGE SCALE MRNA] (ISOFORM 1)</scope>
    <source>
        <strain>cv. Columbia</strain>
    </source>
</reference>
<reference key="5">
    <citation type="submission" date="2006-07" db="EMBL/GenBank/DDBJ databases">
        <title>Large-scale analysis of RIKEN Arabidopsis full-length (RAFL) cDNAs.</title>
        <authorList>
            <person name="Totoki Y."/>
            <person name="Seki M."/>
            <person name="Ishida J."/>
            <person name="Nakajima M."/>
            <person name="Enju A."/>
            <person name="Kamiya A."/>
            <person name="Narusaka M."/>
            <person name="Shin-i T."/>
            <person name="Nakagawa M."/>
            <person name="Sakamoto N."/>
            <person name="Oishi K."/>
            <person name="Kohara Y."/>
            <person name="Kobayashi M."/>
            <person name="Toyoda A."/>
            <person name="Sakaki Y."/>
            <person name="Sakurai T."/>
            <person name="Iida K."/>
            <person name="Akiyama K."/>
            <person name="Satou M."/>
            <person name="Toyoda T."/>
            <person name="Konagaya A."/>
            <person name="Carninci P."/>
            <person name="Kawai J."/>
            <person name="Hayashizaki Y."/>
            <person name="Shinozaki K."/>
        </authorList>
    </citation>
    <scope>NUCLEOTIDE SEQUENCE [LARGE SCALE MRNA] (ISOFORM 1)</scope>
    <source>
        <strain>cv. Columbia</strain>
    </source>
</reference>
<reference key="6">
    <citation type="journal article" date="2008" name="BMC Genomics">
        <title>Arabidopsis mRNA polyadenylation machinery: comprehensive analysis of protein-protein interactions and gene expression profiling.</title>
        <authorList>
            <person name="Hunt A.G."/>
            <person name="Xu R."/>
            <person name="Addepalli B."/>
            <person name="Rao S."/>
            <person name="Forbes K.P."/>
            <person name="Meeks L.R."/>
            <person name="Xing D."/>
            <person name="Mo M."/>
            <person name="Zhao H."/>
            <person name="Bandyopadhyay A."/>
            <person name="Dampanaboina L."/>
            <person name="Marion A."/>
            <person name="Von Lanken C."/>
            <person name="Li Q.Q."/>
        </authorList>
    </citation>
    <scope>INTERACTION WITH PAPS4</scope>
    <scope>GENE FAMILY</scope>
    <scope>NOMENCLATURE</scope>
</reference>
<reference key="7">
    <citation type="journal article" date="2009" name="PLoS ONE">
        <title>Characterization of genes encoding poly(A) polymerases in plants: evidence for duplication and functional specialization.</title>
        <authorList>
            <person name="Meeks L.R."/>
            <person name="Addepalli B."/>
            <person name="Hunt A.G."/>
        </authorList>
    </citation>
    <scope>FUNCTION</scope>
    <scope>DISRUPTION PHENOTYPE</scope>
    <scope>SUBCELLULAR LOCATION</scope>
    <scope>TISSUE SPECIFICITY</scope>
</reference>
<name>PAPS1_ARATH</name>
<keyword id="KW-0025">Alternative splicing</keyword>
<keyword id="KW-0067">ATP-binding</keyword>
<keyword id="KW-0460">Magnesium</keyword>
<keyword id="KW-0479">Metal-binding</keyword>
<keyword id="KW-0507">mRNA processing</keyword>
<keyword id="KW-0547">Nucleotide-binding</keyword>
<keyword id="KW-0548">Nucleotidyltransferase</keyword>
<keyword id="KW-0539">Nucleus</keyword>
<keyword id="KW-1185">Reference proteome</keyword>
<keyword id="KW-0808">Transferase</keyword>
<feature type="chain" id="PRO_0000431345" description="Nuclear poly(A) polymerase 1">
    <location>
        <begin position="1"/>
        <end position="713"/>
    </location>
</feature>
<feature type="region of interest" description="Disordered" evidence="4">
    <location>
        <begin position="480"/>
        <end position="555"/>
    </location>
</feature>
<feature type="compositionally biased region" description="Low complexity" evidence="4">
    <location>
        <begin position="507"/>
        <end position="526"/>
    </location>
</feature>
<feature type="binding site" evidence="1">
    <location>
        <begin position="91"/>
        <end position="93"/>
    </location>
    <ligand>
        <name>ATP</name>
        <dbReference type="ChEBI" id="CHEBI:30616"/>
    </ligand>
</feature>
<feature type="binding site" evidence="2">
    <location>
        <begin position="103"/>
        <end position="106"/>
    </location>
    <ligand>
        <name>ATP</name>
        <dbReference type="ChEBI" id="CHEBI:30616"/>
    </ligand>
</feature>
<feature type="binding site" evidence="1">
    <location>
        <position position="104"/>
    </location>
    <ligand>
        <name>Mg(2+)</name>
        <dbReference type="ChEBI" id="CHEBI:18420"/>
        <label>1</label>
        <note>catalytic</note>
    </ligand>
</feature>
<feature type="binding site" evidence="1">
    <location>
        <position position="104"/>
    </location>
    <ligand>
        <name>Mg(2+)</name>
        <dbReference type="ChEBI" id="CHEBI:18420"/>
        <label>2</label>
        <note>catalytic</note>
    </ligand>
</feature>
<feature type="binding site" evidence="1">
    <location>
        <position position="106"/>
    </location>
    <ligand>
        <name>Mg(2+)</name>
        <dbReference type="ChEBI" id="CHEBI:18420"/>
        <label>1</label>
        <note>catalytic</note>
    </ligand>
</feature>
<feature type="binding site" evidence="1">
    <location>
        <position position="106"/>
    </location>
    <ligand>
        <name>Mg(2+)</name>
        <dbReference type="ChEBI" id="CHEBI:18420"/>
        <label>2</label>
        <note>catalytic</note>
    </ligand>
</feature>
<feature type="binding site" evidence="1">
    <location>
        <position position="159"/>
    </location>
    <ligand>
        <name>ATP</name>
        <dbReference type="ChEBI" id="CHEBI:30616"/>
    </ligand>
</feature>
<feature type="binding site" evidence="1">
    <location>
        <position position="159"/>
    </location>
    <ligand>
        <name>Mg(2+)</name>
        <dbReference type="ChEBI" id="CHEBI:18420"/>
        <label>2</label>
        <note>catalytic</note>
    </ligand>
</feature>
<feature type="binding site" evidence="1">
    <location>
        <position position="229"/>
    </location>
    <ligand>
        <name>ATP</name>
        <dbReference type="ChEBI" id="CHEBI:30616"/>
    </ligand>
</feature>
<feature type="binding site" evidence="1">
    <location>
        <begin position="238"/>
        <end position="239"/>
    </location>
    <ligand>
        <name>ATP</name>
        <dbReference type="ChEBI" id="CHEBI:30616"/>
    </ligand>
</feature>
<feature type="site" description="Interaction with RNA" evidence="2">
    <location>
        <position position="320"/>
    </location>
</feature>
<feature type="site" description="Interaction with RNA" evidence="2">
    <location>
        <position position="391"/>
    </location>
</feature>
<feature type="site" description="Interaction with RNA" evidence="2">
    <location>
        <position position="396"/>
    </location>
</feature>
<feature type="splice variant" id="VSP_057238" description="In isoform 2.">
    <location>
        <begin position="1"/>
        <end position="127"/>
    </location>
</feature>
<comment type="function">
    <text evidence="1 5 7">Essential protein (PubMed:19956626). Polymerase that creates the 3'-poly(A) tail of mRNA's (PubMed:15297145). Also required for the endoribonucleolytic cleavage reaction at some polyadenylation sites. May acquire specificity through interaction with a cleavage and polyadenylation specificity factor (CPSF) at its C-terminus (By similarity).</text>
</comment>
<comment type="catalytic activity">
    <reaction evidence="5">
        <text>RNA(n) + ATP = RNA(n)-3'-adenine ribonucleotide + diphosphate</text>
        <dbReference type="Rhea" id="RHEA:11332"/>
        <dbReference type="Rhea" id="RHEA-COMP:14527"/>
        <dbReference type="Rhea" id="RHEA-COMP:17347"/>
        <dbReference type="ChEBI" id="CHEBI:30616"/>
        <dbReference type="ChEBI" id="CHEBI:33019"/>
        <dbReference type="ChEBI" id="CHEBI:140395"/>
        <dbReference type="ChEBI" id="CHEBI:173115"/>
        <dbReference type="EC" id="2.7.7.19"/>
    </reaction>
</comment>
<comment type="cofactor">
    <cofactor evidence="1">
        <name>Mg(2+)</name>
        <dbReference type="ChEBI" id="CHEBI:18420"/>
    </cofactor>
    <cofactor evidence="1">
        <name>Mn(2+)</name>
        <dbReference type="ChEBI" id="CHEBI:29035"/>
    </cofactor>
    <text evidence="1">Binds 2 magnesium ions. Also active with manganese.</text>
</comment>
<comment type="subunit">
    <text evidence="1 6">Monomer (By similarity). Forms a complex with cleavage and polyadenylation specificity factor (CPSF) subunit PAPS4 (PubMed:18479511).</text>
</comment>
<comment type="interaction">
    <interactant intactId="EBI-1775760">
        <id>Q9LMT2</id>
    </interactant>
    <interactant intactId="EBI-617095">
        <id>Q9LEZ3</id>
        <label>BIM1</label>
    </interactant>
    <organismsDiffer>false</organismsDiffer>
    <experiments>3</experiments>
</comment>
<comment type="subcellular location">
    <subcellularLocation>
        <location evidence="3 7">Nucleus</location>
    </subcellularLocation>
</comment>
<comment type="alternative products">
    <event type="alternative splicing"/>
    <isoform>
        <id>Q9LMT2-1</id>
        <name>1</name>
        <sequence type="displayed"/>
    </isoform>
    <isoform>
        <id>Q9LMT2-2</id>
        <name>2</name>
        <sequence type="described" ref="VSP_057238"/>
    </isoform>
</comment>
<comment type="tissue specificity">
    <text evidence="5 7">Expressed in stems, cotyledons, hypocotyls, radicle, leaves, and, to a lower extent, in roots (including primary and secondary roots as well as root tips) and flowers (PubMed:15297145, PubMed:19956626). In radicle, roots and leaves, mainly present in vascular tissues (PubMed:19956626).</text>
</comment>
<comment type="disruption phenotype">
    <text evidence="7">Lethal.</text>
</comment>
<comment type="similarity">
    <text evidence="9">Belongs to the poly(A) polymerase family.</text>
</comment>
<accession>Q9LMT2</accession>
<accession>F4I948</accession>
<gene>
    <name evidence="8" type="primary">PAPS1</name>
    <name evidence="10" type="ordered locus">At1g17980</name>
    <name evidence="11" type="ORF">F2H15.20</name>
</gene>
<dbReference type="EC" id="2.7.7.19" evidence="5"/>
<dbReference type="EMBL" id="AY323906">
    <property type="protein sequence ID" value="AAP86214.1"/>
    <property type="molecule type" value="mRNA"/>
</dbReference>
<dbReference type="EMBL" id="AC034106">
    <property type="protein sequence ID" value="AAF97277.1"/>
    <property type="molecule type" value="Genomic_DNA"/>
</dbReference>
<dbReference type="EMBL" id="CP002684">
    <property type="protein sequence ID" value="AEE29658.1"/>
    <property type="molecule type" value="Genomic_DNA"/>
</dbReference>
<dbReference type="EMBL" id="CP002684">
    <property type="protein sequence ID" value="AEE29659.1"/>
    <property type="molecule type" value="Genomic_DNA"/>
</dbReference>
<dbReference type="EMBL" id="BT005990">
    <property type="protein sequence ID" value="AAO64925.1"/>
    <property type="molecule type" value="mRNA"/>
</dbReference>
<dbReference type="EMBL" id="AK227446">
    <property type="protein sequence ID" value="BAE99449.1"/>
    <property type="molecule type" value="mRNA"/>
</dbReference>
<dbReference type="PIR" id="B86315">
    <property type="entry name" value="B86315"/>
</dbReference>
<dbReference type="RefSeq" id="NP_173240.2">
    <molecule id="Q9LMT2-1"/>
    <property type="nucleotide sequence ID" value="NM_101661.5"/>
</dbReference>
<dbReference type="RefSeq" id="NP_973855.1">
    <molecule id="Q9LMT2-2"/>
    <property type="nucleotide sequence ID" value="NM_202126.2"/>
</dbReference>
<dbReference type="SMR" id="Q9LMT2"/>
<dbReference type="BioGRID" id="23617">
    <property type="interactions" value="2"/>
</dbReference>
<dbReference type="FunCoup" id="Q9LMT2">
    <property type="interactions" value="4451"/>
</dbReference>
<dbReference type="IntAct" id="Q9LMT2">
    <property type="interactions" value="2"/>
</dbReference>
<dbReference type="STRING" id="3702.Q9LMT2"/>
<dbReference type="iPTMnet" id="Q9LMT2"/>
<dbReference type="PaxDb" id="3702-AT1G17980.1"/>
<dbReference type="ProteomicsDB" id="236274">
    <molecule id="Q9LMT2-1"/>
</dbReference>
<dbReference type="EnsemblPlants" id="AT1G17980.1">
    <molecule id="Q9LMT2-1"/>
    <property type="protein sequence ID" value="AT1G17980.1"/>
    <property type="gene ID" value="AT1G17980"/>
</dbReference>
<dbReference type="EnsemblPlants" id="AT1G17980.2">
    <molecule id="Q9LMT2-2"/>
    <property type="protein sequence ID" value="AT1G17980.2"/>
    <property type="gene ID" value="AT1G17980"/>
</dbReference>
<dbReference type="GeneID" id="838378"/>
<dbReference type="Gramene" id="AT1G17980.1">
    <molecule id="Q9LMT2-1"/>
    <property type="protein sequence ID" value="AT1G17980.1"/>
    <property type="gene ID" value="AT1G17980"/>
</dbReference>
<dbReference type="Gramene" id="AT1G17980.2">
    <molecule id="Q9LMT2-2"/>
    <property type="protein sequence ID" value="AT1G17980.2"/>
    <property type="gene ID" value="AT1G17980"/>
</dbReference>
<dbReference type="KEGG" id="ath:AT1G17980"/>
<dbReference type="Araport" id="AT1G17980"/>
<dbReference type="TAIR" id="AT1G17980">
    <property type="gene designation" value="PAPS1"/>
</dbReference>
<dbReference type="eggNOG" id="KOG2245">
    <property type="taxonomic scope" value="Eukaryota"/>
</dbReference>
<dbReference type="HOGENOM" id="CLU_011511_2_0_1"/>
<dbReference type="InParanoid" id="Q9LMT2"/>
<dbReference type="OMA" id="WEGWIES"/>
<dbReference type="OrthoDB" id="412748at2759"/>
<dbReference type="PhylomeDB" id="Q9LMT2"/>
<dbReference type="BRENDA" id="2.7.7.19">
    <property type="organism ID" value="399"/>
</dbReference>
<dbReference type="PRO" id="PR:Q9LMT2"/>
<dbReference type="Proteomes" id="UP000006548">
    <property type="component" value="Chromosome 1"/>
</dbReference>
<dbReference type="ExpressionAtlas" id="Q9LMT2">
    <property type="expression patterns" value="baseline and differential"/>
</dbReference>
<dbReference type="GO" id="GO:0005634">
    <property type="term" value="C:nucleus"/>
    <property type="evidence" value="ECO:0000314"/>
    <property type="project" value="TAIR"/>
</dbReference>
<dbReference type="GO" id="GO:0005524">
    <property type="term" value="F:ATP binding"/>
    <property type="evidence" value="ECO:0007669"/>
    <property type="project" value="UniProtKB-KW"/>
</dbReference>
<dbReference type="GO" id="GO:0046872">
    <property type="term" value="F:metal ion binding"/>
    <property type="evidence" value="ECO:0007669"/>
    <property type="project" value="UniProtKB-KW"/>
</dbReference>
<dbReference type="GO" id="GO:1990817">
    <property type="term" value="F:poly(A) RNA polymerase activity"/>
    <property type="evidence" value="ECO:0007669"/>
    <property type="project" value="UniProtKB-EC"/>
</dbReference>
<dbReference type="GO" id="GO:0003723">
    <property type="term" value="F:RNA binding"/>
    <property type="evidence" value="ECO:0007669"/>
    <property type="project" value="InterPro"/>
</dbReference>
<dbReference type="GO" id="GO:0009908">
    <property type="term" value="P:flower development"/>
    <property type="evidence" value="ECO:0000315"/>
    <property type="project" value="TAIR"/>
</dbReference>
<dbReference type="GO" id="GO:0048366">
    <property type="term" value="P:leaf development"/>
    <property type="evidence" value="ECO:0000315"/>
    <property type="project" value="TAIR"/>
</dbReference>
<dbReference type="GO" id="GO:0006397">
    <property type="term" value="P:mRNA processing"/>
    <property type="evidence" value="ECO:0007669"/>
    <property type="project" value="UniProtKB-KW"/>
</dbReference>
<dbReference type="GO" id="GO:0008285">
    <property type="term" value="P:negative regulation of cell population proliferation"/>
    <property type="evidence" value="ECO:0000315"/>
    <property type="project" value="TAIR"/>
</dbReference>
<dbReference type="GO" id="GO:0045824">
    <property type="term" value="P:negative regulation of innate immune response"/>
    <property type="evidence" value="ECO:0000315"/>
    <property type="project" value="TAIR"/>
</dbReference>
<dbReference type="GO" id="GO:0048451">
    <property type="term" value="P:petal formation"/>
    <property type="evidence" value="ECO:0000315"/>
    <property type="project" value="TAIR"/>
</dbReference>
<dbReference type="GO" id="GO:0031123">
    <property type="term" value="P:RNA 3'-end processing"/>
    <property type="evidence" value="ECO:0007669"/>
    <property type="project" value="InterPro"/>
</dbReference>
<dbReference type="CDD" id="cd05402">
    <property type="entry name" value="NT_PAP_TUTase"/>
    <property type="match status" value="1"/>
</dbReference>
<dbReference type="FunFam" id="3.30.70.590:FF:000002">
    <property type="entry name" value="Nuclear poly(A) polymerase 4"/>
    <property type="match status" value="1"/>
</dbReference>
<dbReference type="FunFam" id="3.30.460.10:FF:000002">
    <property type="entry name" value="Poly(A) polymerase alpha, putative"/>
    <property type="match status" value="1"/>
</dbReference>
<dbReference type="FunFam" id="1.10.1410.10:FF:000001">
    <property type="entry name" value="Putative poly(A) polymerase gamma"/>
    <property type="match status" value="1"/>
</dbReference>
<dbReference type="Gene3D" id="1.10.1410.10">
    <property type="match status" value="1"/>
</dbReference>
<dbReference type="Gene3D" id="3.30.460.10">
    <property type="entry name" value="Beta Polymerase, domain 2"/>
    <property type="match status" value="1"/>
</dbReference>
<dbReference type="Gene3D" id="3.30.70.590">
    <property type="entry name" value="Poly(A) polymerase predicted RNA binding domain"/>
    <property type="match status" value="1"/>
</dbReference>
<dbReference type="InterPro" id="IPR043519">
    <property type="entry name" value="NT_sf"/>
</dbReference>
<dbReference type="InterPro" id="IPR011068">
    <property type="entry name" value="NuclTrfase_I-like_C"/>
</dbReference>
<dbReference type="InterPro" id="IPR007012">
    <property type="entry name" value="PolA_pol_cen_dom"/>
</dbReference>
<dbReference type="InterPro" id="IPR048840">
    <property type="entry name" value="PolA_pol_NTPase"/>
</dbReference>
<dbReference type="InterPro" id="IPR007010">
    <property type="entry name" value="PolA_pol_RNA-bd_dom"/>
</dbReference>
<dbReference type="InterPro" id="IPR014492">
    <property type="entry name" value="PolyA_polymerase"/>
</dbReference>
<dbReference type="PANTHER" id="PTHR10682">
    <property type="entry name" value="POLY A POLYMERASE"/>
    <property type="match status" value="1"/>
</dbReference>
<dbReference type="PANTHER" id="PTHR10682:SF10">
    <property type="entry name" value="POLYNUCLEOTIDE ADENYLYLTRANSFERASE"/>
    <property type="match status" value="1"/>
</dbReference>
<dbReference type="Pfam" id="PF04928">
    <property type="entry name" value="PAP_central"/>
    <property type="match status" value="1"/>
</dbReference>
<dbReference type="Pfam" id="PF20750">
    <property type="entry name" value="PAP_NTPase"/>
    <property type="match status" value="1"/>
</dbReference>
<dbReference type="Pfam" id="PF04926">
    <property type="entry name" value="PAP_RNA-bind"/>
    <property type="match status" value="2"/>
</dbReference>
<dbReference type="PIRSF" id="PIRSF018425">
    <property type="entry name" value="PolyA_polymerase"/>
    <property type="match status" value="1"/>
</dbReference>
<dbReference type="SUPFAM" id="SSF81301">
    <property type="entry name" value="Nucleotidyltransferase"/>
    <property type="match status" value="1"/>
</dbReference>
<dbReference type="SUPFAM" id="SSF55003">
    <property type="entry name" value="PAP/Archaeal CCA-adding enzyme, C-terminal domain"/>
    <property type="match status" value="1"/>
</dbReference>
<dbReference type="SUPFAM" id="SSF81631">
    <property type="entry name" value="PAP/OAS1 substrate-binding domain"/>
    <property type="match status" value="1"/>
</dbReference>
<organism evidence="12">
    <name type="scientific">Arabidopsis thaliana</name>
    <name type="common">Mouse-ear cress</name>
    <dbReference type="NCBI Taxonomy" id="3702"/>
    <lineage>
        <taxon>Eukaryota</taxon>
        <taxon>Viridiplantae</taxon>
        <taxon>Streptophyta</taxon>
        <taxon>Embryophyta</taxon>
        <taxon>Tracheophyta</taxon>
        <taxon>Spermatophyta</taxon>
        <taxon>Magnoliopsida</taxon>
        <taxon>eudicotyledons</taxon>
        <taxon>Gunneridae</taxon>
        <taxon>Pentapetalae</taxon>
        <taxon>rosids</taxon>
        <taxon>malvids</taxon>
        <taxon>Brassicales</taxon>
        <taxon>Brassicaceae</taxon>
        <taxon>Camelineae</taxon>
        <taxon>Arabidopsis</taxon>
    </lineage>
</organism>
<protein>
    <recommendedName>
        <fullName evidence="8">Nuclear poly(A) polymerase 1</fullName>
        <shortName evidence="9">PAP(I)</shortName>
        <shortName evidence="9">Poly(A) polymerase I</shortName>
        <ecNumber evidence="5">2.7.7.19</ecNumber>
    </recommendedName>
    <alternativeName>
        <fullName evidence="9">Polynucleotide adenylyltransferase 1</fullName>
    </alternativeName>
</protein>
<evidence type="ECO:0000250" key="1">
    <source>
        <dbReference type="UniProtKB" id="P25500"/>
    </source>
</evidence>
<evidence type="ECO:0000250" key="2">
    <source>
        <dbReference type="UniProtKB" id="P29468"/>
    </source>
</evidence>
<evidence type="ECO:0000255" key="3">
    <source>
        <dbReference type="PROSITE-ProRule" id="PRU00768"/>
    </source>
</evidence>
<evidence type="ECO:0000256" key="4">
    <source>
        <dbReference type="SAM" id="MobiDB-lite"/>
    </source>
</evidence>
<evidence type="ECO:0000269" key="5">
    <source>
    </source>
</evidence>
<evidence type="ECO:0000269" key="6">
    <source>
    </source>
</evidence>
<evidence type="ECO:0000269" key="7">
    <source>
    </source>
</evidence>
<evidence type="ECO:0000303" key="8">
    <source>
    </source>
</evidence>
<evidence type="ECO:0000305" key="9"/>
<evidence type="ECO:0000312" key="10">
    <source>
        <dbReference type="Araport" id="AT1G17980"/>
    </source>
</evidence>
<evidence type="ECO:0000312" key="11">
    <source>
        <dbReference type="EMBL" id="AAF97277.1"/>
    </source>
</evidence>
<evidence type="ECO:0000312" key="12">
    <source>
        <dbReference type="Proteomes" id="UP000006548"/>
    </source>
</evidence>
<sequence>MASVQQNGQRFGVSEPISMGGPTEFDVIKTRELEKHLQDVGLYESKEEAVRREEVLGILDQIVKTWIKTISRAKGLNDQLLHEANAKIFTFGSYRLGVHGPGADIDTLCVGPRHATREGDFFGELQRMLSEMPEVTELHPVPDAHVPLMGFKLNGVSIDLLYAQLPLWVIPEDLDLSQDSILQNADEQTVRSLNGCRVTDQILRLVPNIQNFRTTLRCMRFWAKRRGVYSNVSGFLGGINWALLVARICQLYPNALPNILVSRFFRVFYQWNWPNAIFLCSPDEGSLGLQVWDPRINPKDRLHIMPIITPAYPCMNSSYNVSESTLRIMKGEFQRGNEICEAMESNKADWDTLFEPFAFFEAYKNYLQIDISAANVDDLRKWKGWVESRLRQLTLKIERHFKMLHCHPHPHDFQDTSRPLHCSYFMGLQRKQGVPAAEGEQFDIRRTVEEFKHTVNAYTLWIPGMEISVGHIKRRSLPNFVFPGGVRPSHTSKGTWDSNRRSEHRNSSTSSAPAATTTTTEMSSESKAGSNSPVDGKKRKWGDSETLTDQPRNSKHIAVSVPVENCEGGSPNPSVGSICSSPMKDYCTNGKSEPISKDPPENVVAFSKDPPESLPIEKIATPQAHETEELEESFDFGNQVIEQISHKVAVLSATATIPPFEATSNGSPFPYEAVEELEVLPTRQPDAAHRPSVQQRKPIIKLSFTSLGKTNGK</sequence>
<proteinExistence type="evidence at protein level"/>